<sequence length="671" mass="75152">MKPPAGMVFLWVLTSLGAGIGAKIVKEGNPHQVYTLTWQIYSQSGEVVWEVQGNHALNTWWPALTPDFCQLAAGLDTWDIPDRSPKNLETSMEGTSQQLTPQGCSKPWKRCALTERDFYVCPRDNRDRATAHRCGGYEEYFCSAWGCETTGDAYWQPTSTWDLITITRNYTKPDSCDDRVERERKTSRHWRDPLSLPLKITFTDSGKRALGWQTGYTWGLRWYLPGKDRGIILKIKLKIDTITQTVGPNLVLADQKTPVQLAIPVQPPRAPTQTPRVNPVNSTLSPSLGYPAPAPGPRPPYPTSPSRPGTGDRLLNLVQGVYLTLNLTAPNQTQDCWLCLTAKPPYYQGVAIIGNFTNHTNAPLRCSTTPRHGLTLTEVTGYGLCIGKIPPSHQNLCSQTVPSVGQGPYYLTAPNGTYWVCNTGLTPCISLQILNDTADYCILIELWPKIFYHDSEYIYGHYEPGGRFRRDPVSLTVALLLGGLTMGSLAAGIGTGTAALIETNQFKQLQIAMHSDIQALEESISALERSLISLSEVVLQNRRGLDLLFLQEGGLCAALKEECCFYADHTGIVRDSMAKLRERFKQRQKLFESQQGWFEGWYNKSPWFTTLVSSLMVPLILLLLILMFGPCILNHLLQFIRERLSVIQALVLTQQYHQLRQFDAERPDAIE</sequence>
<keyword id="KW-0165">Cleavage on pair of basic residues</keyword>
<keyword id="KW-0175">Coiled coil</keyword>
<keyword id="KW-1015">Disulfide bond</keyword>
<keyword id="KW-1169">Fusion of virus membrane with host cell membrane</keyword>
<keyword id="KW-1168">Fusion of virus membrane with host membrane</keyword>
<keyword id="KW-0325">Glycoprotein</keyword>
<keyword id="KW-1032">Host cell membrane</keyword>
<keyword id="KW-1043">Host membrane</keyword>
<keyword id="KW-0945">Host-virus interaction</keyword>
<keyword id="KW-0449">Lipoprotein</keyword>
<keyword id="KW-0472">Membrane</keyword>
<keyword id="KW-0564">Palmitate</keyword>
<keyword id="KW-0732">Signal</keyword>
<keyword id="KW-0812">Transmembrane</keyword>
<keyword id="KW-1133">Transmembrane helix</keyword>
<keyword id="KW-1161">Viral attachment to host cell</keyword>
<keyword id="KW-0261">Viral envelope protein</keyword>
<keyword id="KW-1162">Viral penetration into host cytoplasm</keyword>
<keyword id="KW-0946">Virion</keyword>
<keyword id="KW-1160">Virus entry into host cell</keyword>
<reference key="1">
    <citation type="submission" date="1990-02" db="EMBL/GenBank/DDBJ databases">
        <title>The exogenous RD-114 and the related endogenous proviral element ECE1 of domestic cat differ in their env genes.</title>
        <authorList>
            <person name="Moehring R."/>
            <person name="Drescher B."/>
            <person name="Riedel H."/>
            <person name="Bauer D."/>
            <person name="Rohde K."/>
            <person name="Beyer W."/>
            <person name="Rosenthal S."/>
        </authorList>
    </citation>
    <scope>NUCLEOTIDE SEQUENCE [GENOMIC DNA]</scope>
</reference>
<protein>
    <recommendedName>
        <fullName>Envelope glycoprotein</fullName>
    </recommendedName>
    <alternativeName>
        <fullName>Env polyprotein</fullName>
    </alternativeName>
    <component>
        <recommendedName>
            <fullName>Surface protein</fullName>
            <shortName>SU</shortName>
        </recommendedName>
        <alternativeName>
            <fullName>Glycoprotein 70</fullName>
            <shortName>gp70</shortName>
        </alternativeName>
    </component>
    <component>
        <recommendedName>
            <fullName>Transmembrane protein</fullName>
            <shortName>TM</shortName>
        </recommendedName>
        <alternativeName>
            <fullName>Envelope protein p15E</fullName>
        </alternativeName>
    </component>
    <component>
        <recommendedName>
            <fullName>R-peptide</fullName>
        </recommendedName>
        <alternativeName>
            <fullName>p2E</fullName>
        </alternativeName>
    </component>
</protein>
<accession>P31791</accession>
<accession>Q28416</accession>
<dbReference type="EMBL" id="X51929">
    <property type="protein sequence ID" value="CAB38567.1"/>
    <property type="molecule type" value="Genomic_DNA"/>
</dbReference>
<dbReference type="PIR" id="S12815">
    <property type="entry name" value="VCMVCE"/>
</dbReference>
<dbReference type="SMR" id="P31791"/>
<dbReference type="GlyCosmos" id="P31791">
    <property type="glycosylation" value="8 sites, No reported glycans"/>
</dbReference>
<dbReference type="GO" id="GO:0020002">
    <property type="term" value="C:host cell plasma membrane"/>
    <property type="evidence" value="ECO:0007669"/>
    <property type="project" value="UniProtKB-SubCell"/>
</dbReference>
<dbReference type="GO" id="GO:0016020">
    <property type="term" value="C:membrane"/>
    <property type="evidence" value="ECO:0007669"/>
    <property type="project" value="UniProtKB-KW"/>
</dbReference>
<dbReference type="GO" id="GO:0019031">
    <property type="term" value="C:viral envelope"/>
    <property type="evidence" value="ECO:0007669"/>
    <property type="project" value="UniProtKB-KW"/>
</dbReference>
<dbReference type="GO" id="GO:0055036">
    <property type="term" value="C:virion membrane"/>
    <property type="evidence" value="ECO:0007669"/>
    <property type="project" value="UniProtKB-SubCell"/>
</dbReference>
<dbReference type="GO" id="GO:0019064">
    <property type="term" value="P:fusion of virus membrane with host plasma membrane"/>
    <property type="evidence" value="ECO:0007669"/>
    <property type="project" value="UniProtKB-KW"/>
</dbReference>
<dbReference type="GO" id="GO:0046718">
    <property type="term" value="P:symbiont entry into host cell"/>
    <property type="evidence" value="ECO:0007669"/>
    <property type="project" value="UniProtKB-KW"/>
</dbReference>
<dbReference type="GO" id="GO:0019062">
    <property type="term" value="P:virion attachment to host cell"/>
    <property type="evidence" value="ECO:0007669"/>
    <property type="project" value="UniProtKB-KW"/>
</dbReference>
<dbReference type="CDD" id="cd09851">
    <property type="entry name" value="HTLV-1-like_HR1-HR2"/>
    <property type="match status" value="1"/>
</dbReference>
<dbReference type="Gene3D" id="1.10.287.210">
    <property type="match status" value="1"/>
</dbReference>
<dbReference type="Gene3D" id="3.90.310.10">
    <property type="entry name" value="ENV polyprotein, receptor-binding domain"/>
    <property type="match status" value="1"/>
</dbReference>
<dbReference type="InterPro" id="IPR008981">
    <property type="entry name" value="FMuLV_rcpt-bd"/>
</dbReference>
<dbReference type="InterPro" id="IPR018154">
    <property type="entry name" value="TLV/ENV_coat_polyprotein"/>
</dbReference>
<dbReference type="PANTHER" id="PTHR10424:SF72">
    <property type="entry name" value="BC035947 PROTEIN-RELATED"/>
    <property type="match status" value="1"/>
</dbReference>
<dbReference type="PANTHER" id="PTHR10424">
    <property type="entry name" value="VIRAL ENVELOPE PROTEIN"/>
    <property type="match status" value="1"/>
</dbReference>
<dbReference type="Pfam" id="PF00429">
    <property type="entry name" value="TLV_coat"/>
    <property type="match status" value="1"/>
</dbReference>
<dbReference type="SUPFAM" id="SSF49830">
    <property type="entry name" value="ENV polyprotein, receptor-binding domain"/>
    <property type="match status" value="1"/>
</dbReference>
<dbReference type="SUPFAM" id="SSF58069">
    <property type="entry name" value="Virus ectodomain"/>
    <property type="match status" value="1"/>
</dbReference>
<name>ENV_FENV1</name>
<comment type="function">
    <text evidence="1">The surface protein (SU) attaches the virus to the host cell by binding to its receptor. This interaction triggers the refolding of the transmembrane protein (TM) and is thought to activate its fusogenic potential by unmasking its fusion peptide. Fusion occurs at the host cell plasma membrane (By similarity).</text>
</comment>
<comment type="function">
    <text evidence="1">The transmembrane protein (TM) acts as a class I viral fusion protein. Under the current model, the protein has at least 3 conformational states: pre-fusion native state, pre-hairpin intermediate state, and post-fusion hairpin state. During viral and target cell membrane fusion, the coiled coil regions (heptad repeats) assume a trimer-of-hairpins structure, positioning the fusion peptide in close proximity to the C-terminal region of the ectodomain. The formation of this structure appears to drive apposition and subsequent fusion of viral and target cell membranes. Membranes fusion leads to delivery of the nucleocapsid into the cytoplasm (By similarity).</text>
</comment>
<comment type="subunit">
    <text evidence="1">The mature envelope protein (Env) consists of a trimer of SU-TM heterodimers attached by noncovalent interactions or by a labile interchain disulfide bond.</text>
</comment>
<comment type="subcellular location">
    <molecule>Transmembrane protein</molecule>
    <subcellularLocation>
        <location evidence="1">Virion membrane</location>
        <topology evidence="1">Single-pass type I membrane protein</topology>
    </subcellularLocation>
    <subcellularLocation>
        <location evidence="1">Host cell membrane</location>
        <topology evidence="1">Single-pass type I membrane protein</topology>
    </subcellularLocation>
</comment>
<comment type="subcellular location">
    <molecule>Surface protein</molecule>
    <subcellularLocation>
        <location>Virion membrane</location>
        <topology>Peripheral membrane protein</topology>
    </subcellularLocation>
    <subcellularLocation>
        <location evidence="1">Host cell membrane</location>
        <topology evidence="1">Peripheral membrane protein</topology>
    </subcellularLocation>
    <text evidence="1">The surface protein is not anchored to the viral envelope, but associates with the extravirion surface through its binding to TM. Both proteins are thought to be concentrated at the site of budding and incorporated into the virions possibly by contacts between the cytoplasmic tail of Env and the N-terminus of Gag (By similarity).</text>
</comment>
<comment type="subcellular location">
    <molecule>R-peptide</molecule>
    <subcellularLocation>
        <location evidence="1">Host cell membrane</location>
        <topology evidence="1">Peripheral membrane protein</topology>
    </subcellularLocation>
    <text evidence="1">The R-peptide is membrane-associated through its palmitate.</text>
</comment>
<comment type="domain">
    <text evidence="1">The 17 amino acids long immunosuppressive region is present in many retroviral envelope proteins. Synthetic peptides derived from this relatively conserved sequence inhibit immune function in vitro and in vivo (By similarity).</text>
</comment>
<comment type="PTM">
    <text evidence="1">Specific enzymatic cleavages in vivo yield mature proteins. Envelope glycoproteins are synthesized as an inactive precursor that is N-glycosylated and processed likely by host cell furin or by a furin-like protease in the Golgi to yield the mature SU and TM proteins. The cleavage site between SU and TM requires the minimal sequence [KR]-X-[KR]-R. The R-peptide is released from the C-terminus of the cytoplasmic tail of the TM protein upon particle formation as a result of proteolytic cleavage by the viral protease. Cleavage of this peptide is required for TM to become fusogenic (By similarity).</text>
</comment>
<comment type="PTM">
    <text evidence="1">The transmembrane protein is palmitoylated.</text>
</comment>
<comment type="PTM">
    <text evidence="1">The R-peptide is palmitoylated.</text>
</comment>
<evidence type="ECO:0000250" key="1"/>
<evidence type="ECO:0000255" key="2"/>
<evidence type="ECO:0000256" key="3">
    <source>
        <dbReference type="SAM" id="MobiDB-lite"/>
    </source>
</evidence>
<feature type="signal peptide" evidence="2">
    <location>
        <begin position="1"/>
        <end position="22"/>
    </location>
</feature>
<feature type="chain" id="PRO_0000239558" description="Envelope glycoprotein">
    <location>
        <begin position="23"/>
        <end position="671"/>
    </location>
</feature>
<feature type="chain" id="PRO_0000040703" description="Surface protein" evidence="1">
    <location>
        <begin position="23"/>
        <end position="470"/>
    </location>
</feature>
<feature type="chain" id="PRO_0000040704" description="Transmembrane protein" evidence="1">
    <location>
        <begin position="471"/>
        <end position="650"/>
    </location>
</feature>
<feature type="peptide" id="PRO_0000239559" description="R-peptide" evidence="1">
    <location>
        <begin position="651"/>
        <end position="671"/>
    </location>
</feature>
<feature type="topological domain" description="Extracellular" evidence="2">
    <location>
        <begin position="23"/>
        <end position="611"/>
    </location>
</feature>
<feature type="transmembrane region" description="Helical" evidence="2">
    <location>
        <begin position="612"/>
        <end position="632"/>
    </location>
</feature>
<feature type="topological domain" description="Cytoplasmic" evidence="2">
    <location>
        <begin position="633"/>
        <end position="671"/>
    </location>
</feature>
<feature type="region of interest" description="Disordered" evidence="3">
    <location>
        <begin position="265"/>
        <end position="310"/>
    </location>
</feature>
<feature type="region of interest" description="Fusion peptide" evidence="2">
    <location>
        <begin position="473"/>
        <end position="493"/>
    </location>
</feature>
<feature type="region of interest" description="Immunosuppression" evidence="1">
    <location>
        <begin position="539"/>
        <end position="555"/>
    </location>
</feature>
<feature type="coiled-coil region" evidence="2">
    <location>
        <begin position="501"/>
        <end position="550"/>
    </location>
</feature>
<feature type="coiled-coil region" evidence="2">
    <location>
        <begin position="560"/>
        <end position="596"/>
    </location>
</feature>
<feature type="short sequence motif" description="CXXC">
    <location>
        <begin position="336"/>
        <end position="339"/>
    </location>
</feature>
<feature type="short sequence motif" description="CX6CC">
    <location>
        <begin position="556"/>
        <end position="564"/>
    </location>
</feature>
<feature type="short sequence motif" description="YXXL motif; contains endocytosis signal" evidence="1">
    <location>
        <begin position="656"/>
        <end position="659"/>
    </location>
</feature>
<feature type="compositionally biased region" description="Polar residues" evidence="3">
    <location>
        <begin position="271"/>
        <end position="286"/>
    </location>
</feature>
<feature type="compositionally biased region" description="Pro residues" evidence="3">
    <location>
        <begin position="292"/>
        <end position="305"/>
    </location>
</feature>
<feature type="site" description="Cleavage; by host" evidence="1">
    <location>
        <begin position="470"/>
        <end position="471"/>
    </location>
</feature>
<feature type="site" description="Cleavage; by viral protease" evidence="1">
    <location>
        <begin position="650"/>
        <end position="651"/>
    </location>
</feature>
<feature type="lipid moiety-binding region" description="S-palmitoyl cysteine; by host" evidence="1">
    <location>
        <position position="631"/>
    </location>
</feature>
<feature type="glycosylation site" description="N-linked (GlcNAc...) asparagine; by host" evidence="2">
    <location>
        <position position="169"/>
    </location>
</feature>
<feature type="glycosylation site" description="N-linked (GlcNAc...) asparagine; by host" evidence="2">
    <location>
        <position position="281"/>
    </location>
</feature>
<feature type="glycosylation site" description="N-linked (GlcNAc...) asparagine; by host" evidence="2">
    <location>
        <position position="326"/>
    </location>
</feature>
<feature type="glycosylation site" description="N-linked (GlcNAc...) asparagine; by host" evidence="2">
    <location>
        <position position="331"/>
    </location>
</feature>
<feature type="glycosylation site" description="N-linked (GlcNAc...) asparagine; by host" evidence="2">
    <location>
        <position position="355"/>
    </location>
</feature>
<feature type="glycosylation site" description="N-linked (GlcNAc...) asparagine; by host" evidence="2">
    <location>
        <position position="358"/>
    </location>
</feature>
<feature type="glycosylation site" description="N-linked (GlcNAc...) asparagine; by host" evidence="2">
    <location>
        <position position="415"/>
    </location>
</feature>
<feature type="glycosylation site" description="N-linked (GlcNAc...) asparagine; by host" evidence="2">
    <location>
        <position position="435"/>
    </location>
</feature>
<feature type="disulfide bond" evidence="1">
    <location>
        <begin position="121"/>
        <end position="142"/>
    </location>
</feature>
<feature type="disulfide bond" evidence="1">
    <location>
        <begin position="134"/>
        <end position="147"/>
    </location>
</feature>
<gene>
    <name type="primary">env</name>
</gene>
<organismHost>
    <name type="scientific">Felidae</name>
    <name type="common">cat family</name>
    <dbReference type="NCBI Taxonomy" id="9681"/>
</organismHost>
<proteinExistence type="inferred from homology"/>
<organism>
    <name type="scientific">Feline endogenous virus ECE1</name>
    <dbReference type="NCBI Taxonomy" id="11766"/>
    <lineage>
        <taxon>Viruses</taxon>
        <taxon>Riboviria</taxon>
        <taxon>Pararnavirae</taxon>
        <taxon>Artverviricota</taxon>
        <taxon>Revtraviricetes</taxon>
        <taxon>Ortervirales</taxon>
        <taxon>Retroviridae</taxon>
        <taxon>Orthoretrovirinae</taxon>
        <taxon>Gammaretrovirus</taxon>
        <taxon>Feline endogenous virus</taxon>
    </lineage>
</organism>